<accession>Q9SF16</accession>
<accession>F4J7H2</accession>
<reference key="1">
    <citation type="journal article" date="2000" name="Nature">
        <title>Sequence and analysis of chromosome 3 of the plant Arabidopsis thaliana.</title>
        <authorList>
            <person name="Salanoubat M."/>
            <person name="Lemcke K."/>
            <person name="Rieger M."/>
            <person name="Ansorge W."/>
            <person name="Unseld M."/>
            <person name="Fartmann B."/>
            <person name="Valle G."/>
            <person name="Bloecker H."/>
            <person name="Perez-Alonso M."/>
            <person name="Obermaier B."/>
            <person name="Delseny M."/>
            <person name="Boutry M."/>
            <person name="Grivell L.A."/>
            <person name="Mache R."/>
            <person name="Puigdomenech P."/>
            <person name="De Simone V."/>
            <person name="Choisne N."/>
            <person name="Artiguenave F."/>
            <person name="Robert C."/>
            <person name="Brottier P."/>
            <person name="Wincker P."/>
            <person name="Cattolico L."/>
            <person name="Weissenbach J."/>
            <person name="Saurin W."/>
            <person name="Quetier F."/>
            <person name="Schaefer M."/>
            <person name="Mueller-Auer S."/>
            <person name="Gabel C."/>
            <person name="Fuchs M."/>
            <person name="Benes V."/>
            <person name="Wurmbach E."/>
            <person name="Drzonek H."/>
            <person name="Erfle H."/>
            <person name="Jordan N."/>
            <person name="Bangert S."/>
            <person name="Wiedelmann R."/>
            <person name="Kranz H."/>
            <person name="Voss H."/>
            <person name="Holland R."/>
            <person name="Brandt P."/>
            <person name="Nyakatura G."/>
            <person name="Vezzi A."/>
            <person name="D'Angelo M."/>
            <person name="Pallavicini A."/>
            <person name="Toppo S."/>
            <person name="Simionati B."/>
            <person name="Conrad A."/>
            <person name="Hornischer K."/>
            <person name="Kauer G."/>
            <person name="Loehnert T.-H."/>
            <person name="Nordsiek G."/>
            <person name="Reichelt J."/>
            <person name="Scharfe M."/>
            <person name="Schoen O."/>
            <person name="Bargues M."/>
            <person name="Terol J."/>
            <person name="Climent J."/>
            <person name="Navarro P."/>
            <person name="Collado C."/>
            <person name="Perez-Perez A."/>
            <person name="Ottenwaelder B."/>
            <person name="Duchemin D."/>
            <person name="Cooke R."/>
            <person name="Laudie M."/>
            <person name="Berger-Llauro C."/>
            <person name="Purnelle B."/>
            <person name="Masuy D."/>
            <person name="de Haan M."/>
            <person name="Maarse A.C."/>
            <person name="Alcaraz J.-P."/>
            <person name="Cottet A."/>
            <person name="Casacuberta E."/>
            <person name="Monfort A."/>
            <person name="Argiriou A."/>
            <person name="Flores M."/>
            <person name="Liguori R."/>
            <person name="Vitale D."/>
            <person name="Mannhaupt G."/>
            <person name="Haase D."/>
            <person name="Schoof H."/>
            <person name="Rudd S."/>
            <person name="Zaccaria P."/>
            <person name="Mewes H.-W."/>
            <person name="Mayer K.F.X."/>
            <person name="Kaul S."/>
            <person name="Town C.D."/>
            <person name="Koo H.L."/>
            <person name="Tallon L.J."/>
            <person name="Jenkins J."/>
            <person name="Rooney T."/>
            <person name="Rizzo M."/>
            <person name="Walts A."/>
            <person name="Utterback T."/>
            <person name="Fujii C.Y."/>
            <person name="Shea T.P."/>
            <person name="Creasy T.H."/>
            <person name="Haas B."/>
            <person name="Maiti R."/>
            <person name="Wu D."/>
            <person name="Peterson J."/>
            <person name="Van Aken S."/>
            <person name="Pai G."/>
            <person name="Militscher J."/>
            <person name="Sellers P."/>
            <person name="Gill J.E."/>
            <person name="Feldblyum T.V."/>
            <person name="Preuss D."/>
            <person name="Lin X."/>
            <person name="Nierman W.C."/>
            <person name="Salzberg S.L."/>
            <person name="White O."/>
            <person name="Venter J.C."/>
            <person name="Fraser C.M."/>
            <person name="Kaneko T."/>
            <person name="Nakamura Y."/>
            <person name="Sato S."/>
            <person name="Kato T."/>
            <person name="Asamizu E."/>
            <person name="Sasamoto S."/>
            <person name="Kimura T."/>
            <person name="Idesawa K."/>
            <person name="Kawashima K."/>
            <person name="Kishida Y."/>
            <person name="Kiyokawa C."/>
            <person name="Kohara M."/>
            <person name="Matsumoto M."/>
            <person name="Matsuno A."/>
            <person name="Muraki A."/>
            <person name="Nakayama S."/>
            <person name="Nakazaki N."/>
            <person name="Shinpo S."/>
            <person name="Takeuchi C."/>
            <person name="Wada T."/>
            <person name="Watanabe A."/>
            <person name="Yamada M."/>
            <person name="Yasuda M."/>
            <person name="Tabata S."/>
        </authorList>
    </citation>
    <scope>NUCLEOTIDE SEQUENCE [LARGE SCALE GENOMIC DNA]</scope>
    <source>
        <strain>cv. Columbia</strain>
    </source>
</reference>
<reference key="2">
    <citation type="journal article" date="2017" name="Plant J.">
        <title>Araport11: a complete reannotation of the Arabidopsis thaliana reference genome.</title>
        <authorList>
            <person name="Cheng C.Y."/>
            <person name="Krishnakumar V."/>
            <person name="Chan A.P."/>
            <person name="Thibaud-Nissen F."/>
            <person name="Schobel S."/>
            <person name="Town C.D."/>
        </authorList>
    </citation>
    <scope>GENOME REANNOTATION</scope>
    <source>
        <strain>cv. Columbia</strain>
    </source>
</reference>
<reference key="3">
    <citation type="journal article" date="2003" name="Science">
        <title>Empirical analysis of transcriptional activity in the Arabidopsis genome.</title>
        <authorList>
            <person name="Yamada K."/>
            <person name="Lim J."/>
            <person name="Dale J.M."/>
            <person name="Chen H."/>
            <person name="Shinn P."/>
            <person name="Palm C.J."/>
            <person name="Southwick A.M."/>
            <person name="Wu H.C."/>
            <person name="Kim C.J."/>
            <person name="Nguyen M."/>
            <person name="Pham P.K."/>
            <person name="Cheuk R.F."/>
            <person name="Karlin-Newmann G."/>
            <person name="Liu S.X."/>
            <person name="Lam B."/>
            <person name="Sakano H."/>
            <person name="Wu T."/>
            <person name="Yu G."/>
            <person name="Miranda M."/>
            <person name="Quach H.L."/>
            <person name="Tripp M."/>
            <person name="Chang C.H."/>
            <person name="Lee J.M."/>
            <person name="Toriumi M.J."/>
            <person name="Chan M.M."/>
            <person name="Tang C.C."/>
            <person name="Onodera C.S."/>
            <person name="Deng J.M."/>
            <person name="Akiyama K."/>
            <person name="Ansari Y."/>
            <person name="Arakawa T."/>
            <person name="Banh J."/>
            <person name="Banno F."/>
            <person name="Bowser L."/>
            <person name="Brooks S.Y."/>
            <person name="Carninci P."/>
            <person name="Chao Q."/>
            <person name="Choy N."/>
            <person name="Enju A."/>
            <person name="Goldsmith A.D."/>
            <person name="Gurjal M."/>
            <person name="Hansen N.F."/>
            <person name="Hayashizaki Y."/>
            <person name="Johnson-Hopson C."/>
            <person name="Hsuan V.W."/>
            <person name="Iida K."/>
            <person name="Karnes M."/>
            <person name="Khan S."/>
            <person name="Koesema E."/>
            <person name="Ishida J."/>
            <person name="Jiang P.X."/>
            <person name="Jones T."/>
            <person name="Kawai J."/>
            <person name="Kamiya A."/>
            <person name="Meyers C."/>
            <person name="Nakajima M."/>
            <person name="Narusaka M."/>
            <person name="Seki M."/>
            <person name="Sakurai T."/>
            <person name="Satou M."/>
            <person name="Tamse R."/>
            <person name="Vaysberg M."/>
            <person name="Wallender E.K."/>
            <person name="Wong C."/>
            <person name="Yamamura Y."/>
            <person name="Yuan S."/>
            <person name="Shinozaki K."/>
            <person name="Davis R.W."/>
            <person name="Theologis A."/>
            <person name="Ecker J.R."/>
        </authorList>
    </citation>
    <scope>NUCLEOTIDE SEQUENCE [LARGE SCALE MRNA] (ISOFORM 1)</scope>
    <source>
        <strain>cv. Columbia</strain>
    </source>
</reference>
<reference key="4">
    <citation type="journal article" date="2001" name="Cell Stress Chaperones">
        <title>Arabidopsis thaliana type I and II chaperonins.</title>
        <authorList>
            <person name="Hill J.E."/>
            <person name="Hemmingsen S.M."/>
        </authorList>
    </citation>
    <scope>GENE FAMILY</scope>
    <scope>NOMENCLATURE</scope>
    <scope>SUBUNIT</scope>
</reference>
<reference key="5">
    <citation type="journal article" date="2011" name="Science">
        <title>Chaperonins facilitate KNOTTED1 cell-to-cell trafficking and stem cell function.</title>
        <authorList>
            <person name="Xu X.M."/>
            <person name="Wang J."/>
            <person name="Xuan Z."/>
            <person name="Goldshmidt A."/>
            <person name="Borrill P.G."/>
            <person name="Hariharan N."/>
            <person name="Kim J.Y."/>
            <person name="Jackson D."/>
        </authorList>
    </citation>
    <scope>INTERACTION WITH KNAT1</scope>
</reference>
<reference key="6">
    <citation type="journal article" date="2012" name="Mol. Cell. Proteomics">
        <title>Comparative large-scale characterisation of plant vs. mammal proteins reveals similar and idiosyncratic N-alpha acetylation features.</title>
        <authorList>
            <person name="Bienvenut W.V."/>
            <person name="Sumpton D."/>
            <person name="Martinez A."/>
            <person name="Lilla S."/>
            <person name="Espagne C."/>
            <person name="Meinnel T."/>
            <person name="Giglione C."/>
        </authorList>
    </citation>
    <scope>ACETYLATION [LARGE SCALE ANALYSIS] AT ALA-2</scope>
    <scope>CLEAVAGE OF INITIATOR METHIONINE [LARGE SCALE ANALYSIS]</scope>
    <scope>IDENTIFICATION BY MASS SPECTROMETRY [LARGE SCALE ANALYSIS]</scope>
</reference>
<sequence length="557" mass="59776">MASMMQPQIILLKEGTDTSQGKAQLVSNINACTAVGDVVRTTLGPRGMDKLIHDDKGSVTISNDGATIMKLLDIVHPAAKILVDIAKSQDSEVGDGTTTVVLLAAEFLKEAKPFIEDGVHAQNLIRSYRTASTLAIAKVKELAVSIEGKSVEEKKGLLAKCAATTLSSKLIGGEKEFFATMVVDAVMAIGNDDRLNLIGIKKVPGGNMRDSFLVDGVAFKKTFSYAGFEQQPKKFLNPKILLLNIELELKSEKENAEIRLSDPSQYQSIVDAEWNIIYDKLDKCVESGAKVVLSRLAIGDLATQYFADRDIFCAGRVAEEDLNRVAAAAGGTVQTSVNNIIDEVLGTCEIFEEKQVGGERFNIFSGCPSGRTATIVLRGGADQFIEEAERSLHDAIMIVRRAVKNSTVVPGGGAIDMEISKYLRQHSRTIAGKSQLFINSYAKALEVIPRQLCDNAGFDATDVLNKLRQKHAMQSGEGASYGVDINTGGIADSFANFVWEPAVVKINAINAATEAACLILSVDETVKNPKSESAQGDAAGAMGRGRGGGRGRGMRRR</sequence>
<feature type="initiator methionine" description="Removed" evidence="11">
    <location>
        <position position="1"/>
    </location>
</feature>
<feature type="chain" id="PRO_0000431664" description="T-complex protein 1 subunit eta">
    <location>
        <begin position="2"/>
        <end position="557"/>
    </location>
</feature>
<feature type="region of interest" description="Disordered" evidence="2">
    <location>
        <begin position="529"/>
        <end position="557"/>
    </location>
</feature>
<feature type="compositionally biased region" description="Basic residues" evidence="2">
    <location>
        <begin position="547"/>
        <end position="557"/>
    </location>
</feature>
<feature type="modified residue" description="N-acetylalanine" evidence="11">
    <location>
        <position position="2"/>
    </location>
</feature>
<feature type="splice variant" id="VSP_057340" description="In isoform 2.">
    <location>
        <begin position="417"/>
        <end position="418"/>
    </location>
</feature>
<gene>
    <name evidence="5" type="primary">CCT7</name>
    <name evidence="8" type="ordered locus">At3g11830</name>
    <name evidence="9" type="ORF">F26K24.12</name>
</gene>
<comment type="function">
    <text evidence="6">Molecular chaperone; assists the folding of proteins upon ATP hydrolysis. Known to play a role, in vitro, in the folding of actin and tubulin.</text>
</comment>
<comment type="subunit">
    <text evidence="3 7">Heterooligomeric complex of about 850 to 900 kDa that forms two stacked rings, 12 to 16 nm in diameter (PubMed:11599560). Interacts with KNAT1 (PubMed:21868675).</text>
</comment>
<comment type="subcellular location">
    <subcellularLocation>
        <location evidence="6">Cytoplasm</location>
    </subcellularLocation>
</comment>
<comment type="alternative products">
    <event type="alternative splicing"/>
    <isoform>
        <id>Q9SF16-1</id>
        <name>1</name>
        <sequence type="displayed"/>
    </isoform>
    <isoform>
        <id>Q9SF16-2</id>
        <name>2</name>
        <sequence type="described" ref="VSP_057340"/>
    </isoform>
</comment>
<comment type="similarity">
    <text evidence="1">Belongs to the TCP-1 chaperonin family.</text>
</comment>
<protein>
    <recommendedName>
        <fullName evidence="4">T-complex protein 1 subunit eta</fullName>
        <shortName evidence="4">TCP-1-eta</shortName>
    </recommendedName>
    <alternativeName>
        <fullName evidence="4">CCT-eta</fullName>
    </alternativeName>
    <alternativeName>
        <fullName evidence="5">Chaperonin CCT7</fullName>
    </alternativeName>
</protein>
<keyword id="KW-0007">Acetylation</keyword>
<keyword id="KW-0025">Alternative splicing</keyword>
<keyword id="KW-0067">ATP-binding</keyword>
<keyword id="KW-0143">Chaperone</keyword>
<keyword id="KW-0963">Cytoplasm</keyword>
<keyword id="KW-0547">Nucleotide-binding</keyword>
<keyword id="KW-1185">Reference proteome</keyword>
<dbReference type="EMBL" id="AC016795">
    <property type="protein sequence ID" value="AAF23199.1"/>
    <property type="molecule type" value="Genomic_DNA"/>
</dbReference>
<dbReference type="EMBL" id="CP002686">
    <property type="protein sequence ID" value="AEE75105.1"/>
    <property type="molecule type" value="Genomic_DNA"/>
</dbReference>
<dbReference type="EMBL" id="CP002686">
    <property type="protein sequence ID" value="AEE75106.1"/>
    <property type="molecule type" value="Genomic_DNA"/>
</dbReference>
<dbReference type="EMBL" id="AY070472">
    <property type="protein sequence ID" value="AAL49938.1"/>
    <property type="molecule type" value="mRNA"/>
</dbReference>
<dbReference type="EMBL" id="AY102137">
    <property type="protein sequence ID" value="AAM26704.1"/>
    <property type="molecule type" value="mRNA"/>
</dbReference>
<dbReference type="RefSeq" id="NP_001189863.1">
    <molecule id="Q9SF16-2"/>
    <property type="nucleotide sequence ID" value="NM_001202934.1"/>
</dbReference>
<dbReference type="RefSeq" id="NP_187789.1">
    <molecule id="Q9SF16-1"/>
    <property type="nucleotide sequence ID" value="NM_112016.5"/>
</dbReference>
<dbReference type="SMR" id="Q9SF16"/>
<dbReference type="FunCoup" id="Q9SF16">
    <property type="interactions" value="5102"/>
</dbReference>
<dbReference type="IntAct" id="Q9SF16">
    <property type="interactions" value="11"/>
</dbReference>
<dbReference type="STRING" id="3702.Q9SF16"/>
<dbReference type="iPTMnet" id="Q9SF16"/>
<dbReference type="PaxDb" id="3702-AT3G11830.1"/>
<dbReference type="ProteomicsDB" id="234253">
    <molecule id="Q9SF16-1"/>
</dbReference>
<dbReference type="EnsemblPlants" id="AT3G11830.1">
    <molecule id="Q9SF16-1"/>
    <property type="protein sequence ID" value="AT3G11830.1"/>
    <property type="gene ID" value="AT3G11830"/>
</dbReference>
<dbReference type="EnsemblPlants" id="AT3G11830.2">
    <molecule id="Q9SF16-2"/>
    <property type="protein sequence ID" value="AT3G11830.2"/>
    <property type="gene ID" value="AT3G11830"/>
</dbReference>
<dbReference type="GeneID" id="820356"/>
<dbReference type="Gramene" id="AT3G11830.1">
    <molecule id="Q9SF16-1"/>
    <property type="protein sequence ID" value="AT3G11830.1"/>
    <property type="gene ID" value="AT3G11830"/>
</dbReference>
<dbReference type="Gramene" id="AT3G11830.2">
    <molecule id="Q9SF16-2"/>
    <property type="protein sequence ID" value="AT3G11830.2"/>
    <property type="gene ID" value="AT3G11830"/>
</dbReference>
<dbReference type="KEGG" id="ath:AT3G11830"/>
<dbReference type="Araport" id="AT3G11830"/>
<dbReference type="TAIR" id="AT3G11830"/>
<dbReference type="eggNOG" id="KOG0361">
    <property type="taxonomic scope" value="Eukaryota"/>
</dbReference>
<dbReference type="HOGENOM" id="CLU_008891_7_1_1"/>
<dbReference type="InParanoid" id="Q9SF16"/>
<dbReference type="OMA" id="HRKGNTW"/>
<dbReference type="OrthoDB" id="505829at2759"/>
<dbReference type="PhylomeDB" id="Q9SF16"/>
<dbReference type="BRENDA" id="3.6.4.B10">
    <property type="organism ID" value="399"/>
</dbReference>
<dbReference type="CD-CODE" id="4299E36E">
    <property type="entry name" value="Nucleolus"/>
</dbReference>
<dbReference type="PRO" id="PR:Q9SF16"/>
<dbReference type="Proteomes" id="UP000006548">
    <property type="component" value="Chromosome 3"/>
</dbReference>
<dbReference type="ExpressionAtlas" id="Q9SF16">
    <property type="expression patterns" value="baseline and differential"/>
</dbReference>
<dbReference type="GO" id="GO:0005832">
    <property type="term" value="C:chaperonin-containing T-complex"/>
    <property type="evidence" value="ECO:0007669"/>
    <property type="project" value="UniProtKB-ARBA"/>
</dbReference>
<dbReference type="GO" id="GO:0005829">
    <property type="term" value="C:cytosol"/>
    <property type="evidence" value="ECO:0007005"/>
    <property type="project" value="TAIR"/>
</dbReference>
<dbReference type="GO" id="GO:0005524">
    <property type="term" value="F:ATP binding"/>
    <property type="evidence" value="ECO:0007669"/>
    <property type="project" value="UniProtKB-KW"/>
</dbReference>
<dbReference type="GO" id="GO:0016887">
    <property type="term" value="F:ATP hydrolysis activity"/>
    <property type="evidence" value="ECO:0007669"/>
    <property type="project" value="InterPro"/>
</dbReference>
<dbReference type="GO" id="GO:0140662">
    <property type="term" value="F:ATP-dependent protein folding chaperone"/>
    <property type="evidence" value="ECO:0007669"/>
    <property type="project" value="InterPro"/>
</dbReference>
<dbReference type="GO" id="GO:0051082">
    <property type="term" value="F:unfolded protein binding"/>
    <property type="evidence" value="ECO:0007669"/>
    <property type="project" value="InterPro"/>
</dbReference>
<dbReference type="CDD" id="cd03340">
    <property type="entry name" value="TCP1_eta"/>
    <property type="match status" value="1"/>
</dbReference>
<dbReference type="FunFam" id="1.10.560.10:FF:000017">
    <property type="entry name" value="T-complex protein 1 subunit eta"/>
    <property type="match status" value="1"/>
</dbReference>
<dbReference type="FunFam" id="3.30.260.10:FF:000022">
    <property type="entry name" value="T-complex protein 1 subunit eta"/>
    <property type="match status" value="1"/>
</dbReference>
<dbReference type="FunFam" id="3.50.7.10:FF:000006">
    <property type="entry name" value="T-complex protein 1 subunit eta"/>
    <property type="match status" value="1"/>
</dbReference>
<dbReference type="Gene3D" id="3.50.7.10">
    <property type="entry name" value="GroEL"/>
    <property type="match status" value="1"/>
</dbReference>
<dbReference type="Gene3D" id="1.10.560.10">
    <property type="entry name" value="GroEL-like equatorial domain"/>
    <property type="match status" value="1"/>
</dbReference>
<dbReference type="Gene3D" id="3.30.260.10">
    <property type="entry name" value="TCP-1-like chaperonin intermediate domain"/>
    <property type="match status" value="1"/>
</dbReference>
<dbReference type="InterPro" id="IPR012720">
    <property type="entry name" value="Chap_CCT_eta"/>
</dbReference>
<dbReference type="InterPro" id="IPR017998">
    <property type="entry name" value="Chaperone_TCP-1"/>
</dbReference>
<dbReference type="InterPro" id="IPR002194">
    <property type="entry name" value="Chaperonin_TCP-1_CS"/>
</dbReference>
<dbReference type="InterPro" id="IPR002423">
    <property type="entry name" value="Cpn60/GroEL/TCP-1"/>
</dbReference>
<dbReference type="InterPro" id="IPR027409">
    <property type="entry name" value="GroEL-like_apical_dom_sf"/>
</dbReference>
<dbReference type="InterPro" id="IPR027413">
    <property type="entry name" value="GROEL-like_equatorial_sf"/>
</dbReference>
<dbReference type="InterPro" id="IPR027410">
    <property type="entry name" value="TCP-1-like_intermed_sf"/>
</dbReference>
<dbReference type="InterPro" id="IPR053374">
    <property type="entry name" value="TCP-1_chaperonin"/>
</dbReference>
<dbReference type="InterPro" id="IPR054827">
    <property type="entry name" value="thermosome_alpha"/>
</dbReference>
<dbReference type="NCBIfam" id="TIGR02345">
    <property type="entry name" value="chap_CCT_eta"/>
    <property type="match status" value="1"/>
</dbReference>
<dbReference type="NCBIfam" id="NF041082">
    <property type="entry name" value="thermosome_alpha"/>
    <property type="match status" value="1"/>
</dbReference>
<dbReference type="NCBIfam" id="NF041083">
    <property type="entry name" value="thermosome_beta"/>
    <property type="match status" value="1"/>
</dbReference>
<dbReference type="PANTHER" id="PTHR11353">
    <property type="entry name" value="CHAPERONIN"/>
    <property type="match status" value="1"/>
</dbReference>
<dbReference type="Pfam" id="PF00118">
    <property type="entry name" value="Cpn60_TCP1"/>
    <property type="match status" value="1"/>
</dbReference>
<dbReference type="PRINTS" id="PR00304">
    <property type="entry name" value="TCOMPLEXTCP1"/>
</dbReference>
<dbReference type="SUPFAM" id="SSF52029">
    <property type="entry name" value="GroEL apical domain-like"/>
    <property type="match status" value="1"/>
</dbReference>
<dbReference type="SUPFAM" id="SSF48592">
    <property type="entry name" value="GroEL equatorial domain-like"/>
    <property type="match status" value="1"/>
</dbReference>
<dbReference type="SUPFAM" id="SSF54849">
    <property type="entry name" value="GroEL-intermediate domain like"/>
    <property type="match status" value="1"/>
</dbReference>
<dbReference type="PROSITE" id="PS00750">
    <property type="entry name" value="TCP1_1"/>
    <property type="match status" value="1"/>
</dbReference>
<dbReference type="PROSITE" id="PS00751">
    <property type="entry name" value="TCP1_2"/>
    <property type="match status" value="1"/>
</dbReference>
<dbReference type="PROSITE" id="PS00995">
    <property type="entry name" value="TCP1_3"/>
    <property type="match status" value="1"/>
</dbReference>
<proteinExistence type="evidence at protein level"/>
<name>TCPH_ARATH</name>
<organism evidence="10">
    <name type="scientific">Arabidopsis thaliana</name>
    <name type="common">Mouse-ear cress</name>
    <dbReference type="NCBI Taxonomy" id="3702"/>
    <lineage>
        <taxon>Eukaryota</taxon>
        <taxon>Viridiplantae</taxon>
        <taxon>Streptophyta</taxon>
        <taxon>Embryophyta</taxon>
        <taxon>Tracheophyta</taxon>
        <taxon>Spermatophyta</taxon>
        <taxon>Magnoliopsida</taxon>
        <taxon>eudicotyledons</taxon>
        <taxon>Gunneridae</taxon>
        <taxon>Pentapetalae</taxon>
        <taxon>rosids</taxon>
        <taxon>malvids</taxon>
        <taxon>Brassicales</taxon>
        <taxon>Brassicaceae</taxon>
        <taxon>Camelineae</taxon>
        <taxon>Arabidopsis</taxon>
    </lineage>
</organism>
<evidence type="ECO:0000255" key="1">
    <source>
        <dbReference type="RuleBase" id="RU004187"/>
    </source>
</evidence>
<evidence type="ECO:0000256" key="2">
    <source>
        <dbReference type="SAM" id="MobiDB-lite"/>
    </source>
</evidence>
<evidence type="ECO:0000269" key="3">
    <source>
    </source>
</evidence>
<evidence type="ECO:0000303" key="4">
    <source>
    </source>
</evidence>
<evidence type="ECO:0000303" key="5">
    <source>
    </source>
</evidence>
<evidence type="ECO:0000305" key="6"/>
<evidence type="ECO:0000305" key="7">
    <source>
    </source>
</evidence>
<evidence type="ECO:0000312" key="8">
    <source>
        <dbReference type="Araport" id="AT3G11830"/>
    </source>
</evidence>
<evidence type="ECO:0000312" key="9">
    <source>
        <dbReference type="EMBL" id="AAF23199.1"/>
    </source>
</evidence>
<evidence type="ECO:0000312" key="10">
    <source>
        <dbReference type="Proteomes" id="UP000006548"/>
    </source>
</evidence>
<evidence type="ECO:0007744" key="11">
    <source>
    </source>
</evidence>